<reference key="1">
    <citation type="submission" date="2006-09" db="EMBL/GenBank/DDBJ databases">
        <title>NISC comparative sequencing initiative.</title>
        <authorList>
            <person name="Antonellis A."/>
            <person name="Ayele K."/>
            <person name="Benjamin B."/>
            <person name="Blakesley R.W."/>
            <person name="Boakye A."/>
            <person name="Bouffard G.G."/>
            <person name="Brinkley C."/>
            <person name="Brooks S."/>
            <person name="Chu G."/>
            <person name="Coleman H."/>
            <person name="Engle J."/>
            <person name="Gestole M."/>
            <person name="Greene A."/>
            <person name="Guan X."/>
            <person name="Gupta J."/>
            <person name="Haghighi P."/>
            <person name="Han J."/>
            <person name="Hansen N."/>
            <person name="Ho S.-L."/>
            <person name="Hu P."/>
            <person name="Hunter G."/>
            <person name="Hurle B."/>
            <person name="Idol J.R."/>
            <person name="Kwong P."/>
            <person name="Laric P."/>
            <person name="Larson S."/>
            <person name="Lee-Lin S.-Q."/>
            <person name="Legaspi R."/>
            <person name="Madden M."/>
            <person name="Maduro Q.L."/>
            <person name="Maduro V.B."/>
            <person name="Margulies E.H."/>
            <person name="Masiello C."/>
            <person name="Maskeri B."/>
            <person name="McDowell J."/>
            <person name="Mojidi H.A."/>
            <person name="Mullikin J.C."/>
            <person name="Oestreicher J.S."/>
            <person name="Park M."/>
            <person name="Portnoy M.E."/>
            <person name="Prasad A."/>
            <person name="Puri O."/>
            <person name="Reddix-Dugue N."/>
            <person name="Schandler K."/>
            <person name="Schueler M.G."/>
            <person name="Sison C."/>
            <person name="Stantripop S."/>
            <person name="Stephen E."/>
            <person name="Taye A."/>
            <person name="Thomas J.W."/>
            <person name="Thomas P.J."/>
            <person name="Tsipouri V."/>
            <person name="Ung L."/>
            <person name="Vogt J.L."/>
            <person name="Wetherby K.D."/>
            <person name="Young A."/>
            <person name="Green E.D."/>
        </authorList>
    </citation>
    <scope>NUCLEOTIDE SEQUENCE [LARGE SCALE GENOMIC DNA]</scope>
</reference>
<keyword id="KW-0067">ATP-binding</keyword>
<keyword id="KW-1015">Disulfide bond</keyword>
<keyword id="KW-0325">Glycoprotein</keyword>
<keyword id="KW-0418">Kinase</keyword>
<keyword id="KW-0472">Membrane</keyword>
<keyword id="KW-0547">Nucleotide-binding</keyword>
<keyword id="KW-0597">Phosphoprotein</keyword>
<keyword id="KW-0656">Proto-oncogene</keyword>
<keyword id="KW-0675">Receptor</keyword>
<keyword id="KW-1185">Reference proteome</keyword>
<keyword id="KW-0677">Repeat</keyword>
<keyword id="KW-0732">Signal</keyword>
<keyword id="KW-0808">Transferase</keyword>
<keyword id="KW-0812">Transmembrane</keyword>
<keyword id="KW-1133">Transmembrane helix</keyword>
<keyword id="KW-0829">Tyrosine-protein kinase</keyword>
<keyword id="KW-0832">Ubl conjugation</keyword>
<name>MET_SAIBB</name>
<gene>
    <name type="primary">MET</name>
</gene>
<comment type="function">
    <text evidence="1">Receptor tyrosine kinase that transduces signals from the extracellular matrix into the cytoplasm by binding to hepatocyte growth factor/HGF ligand. Regulates many physiological processes including proliferation, scattering, morphogenesis and survival. Ligand binding at the cell surface induces autophosphorylation of MET on its intracellular domain that provides docking sites for downstream signaling molecules. Following activation by ligand, interacts with the PI3-kinase subunit PIK3R1, PLCG1, SRC, GRB2, STAT3 or the adapter GAB1. Recruitment of these downstream effectors by MET leads to the activation of several signaling cascades including the RAS-ERK, PI3 kinase-AKT, or PLCgamma-PKC. The RAS-ERK activation is associated with the morphogenetic effects while PI3K/AKT coordinates prosurvival effects. During embryonic development, MET signaling plays a role in gastrulation, development and migration of muscles and neuronal precursors, angiogenesis and kidney formation. In adults, participates in wound healing as well as organ regeneration and tissue remodeling. Also promotes differentiation and proliferation of hematopoietic cells (By similarity).</text>
</comment>
<comment type="catalytic activity">
    <reaction evidence="7">
        <text>L-tyrosyl-[protein] + ATP = O-phospho-L-tyrosyl-[protein] + ADP + H(+)</text>
        <dbReference type="Rhea" id="RHEA:10596"/>
        <dbReference type="Rhea" id="RHEA-COMP:10136"/>
        <dbReference type="Rhea" id="RHEA-COMP:20101"/>
        <dbReference type="ChEBI" id="CHEBI:15378"/>
        <dbReference type="ChEBI" id="CHEBI:30616"/>
        <dbReference type="ChEBI" id="CHEBI:46858"/>
        <dbReference type="ChEBI" id="CHEBI:61978"/>
        <dbReference type="ChEBI" id="CHEBI:456216"/>
        <dbReference type="EC" id="2.7.10.1"/>
    </reaction>
</comment>
<comment type="activity regulation">
    <text evidence="1">In its inactive state, the C-terminal tail interacts with the catalytic domain and inhibits the kinase activity. Upon ligand binding, the C-terminal tail is displaced and becomes phosphorylated, thus increasing the kinase activity (By similarity).</text>
</comment>
<comment type="subunit">
    <text evidence="2 3">Heterodimer made of an alpha chain (50 kDa) and a beta chain (145 kDa) which are disulfide linked. Binds PLXNB1. Interacts when phosphorylated with downstream effectors including STAT3, PIK3R1, SRC, PCLG1, GRB2 and GAB1. Interacts with SPSB1, SPSB2 and SPSB4. Interacts with INPP5D/SHIP1. When phosphorylated at Tyr-1356, interacts with INPPL1/SHIP2. Interacts with RANBP9 and RANBP10, as well as SPSB1, SPSB2, SPSB3 and SPSB4. SPSB1 binding occurs in the presence and in the absence of HGF, however HGF treatment has a positive effect on this interaction. Interacts with MUC20; prevents interaction with GRB2 and suppresses hepatocyte growth factor-induced cell proliferation. Interacts with GRB10. Interacts with PTPN1 and PTPN2. Interacts with HSP90AA1 and HSP90AB1; the interaction suppresses MET kinase activity. Interacts with tensin TNS3 (By similarity). Interacts (when phosphorylated) with tensin TNS4 (via SH2 domain); the interaction increases MET protein stability by inhibiting MET endocytosis and subsequent lysosomal degradation (By similarity).</text>
</comment>
<comment type="subcellular location">
    <subcellularLocation>
        <location evidence="1">Membrane</location>
        <topology evidence="1">Single-pass type I membrane protein</topology>
    </subcellularLocation>
</comment>
<comment type="domain">
    <text evidence="1">The kinase domain is involved in SPSB1 binding.</text>
</comment>
<comment type="domain">
    <text evidence="1">The beta-propeller Sema domain mediates binding to HGF.</text>
</comment>
<comment type="PTM">
    <text evidence="2">Autophosphorylated in response to ligand binding on Tyr-1234 and Tyr-1235 in the kinase domain leading to further phosphorylation of Tyr-1349 and Tyr-1356 in the C-terminal multifunctional docking site. Dephosphorylated by PTPRJ at Tyr-1349 and Tyr-1365. Dephosphorylated by PTPN1 and PTPN2 (By similarity).</text>
</comment>
<comment type="PTM">
    <text evidence="2">Ubiquitinated. Ubiquitination by CBL regulates the receptor stability and activity through proteasomal degradation (By similarity).</text>
</comment>
<comment type="PTM">
    <text evidence="2">O-mannosylation of IPT/TIG domains by TMEM260 is required for protein maturation. O-mannosylated residues are composed of single mannose glycans that are not elongated or modified.</text>
</comment>
<comment type="similarity">
    <text evidence="5">Belongs to the protein kinase superfamily. Tyr protein kinase family.</text>
</comment>
<protein>
    <recommendedName>
        <fullName>Hepatocyte growth factor receptor</fullName>
        <shortName>HGF receptor</shortName>
        <ecNumber>2.7.10.1</ecNumber>
    </recommendedName>
    <alternativeName>
        <fullName>HGF/SF receptor</fullName>
    </alternativeName>
    <alternativeName>
        <fullName>Proto-oncogene c-Met</fullName>
    </alternativeName>
    <alternativeName>
        <fullName>Scatter factor receptor</fullName>
        <shortName>SF receptor</shortName>
    </alternativeName>
    <alternativeName>
        <fullName>Tyrosine-protein kinase Met</fullName>
    </alternativeName>
</protein>
<evidence type="ECO:0000250" key="1"/>
<evidence type="ECO:0000250" key="2">
    <source>
        <dbReference type="UniProtKB" id="P08581"/>
    </source>
</evidence>
<evidence type="ECO:0000250" key="3">
    <source>
        <dbReference type="UniProtKB" id="P16056"/>
    </source>
</evidence>
<evidence type="ECO:0000255" key="4"/>
<evidence type="ECO:0000255" key="5">
    <source>
        <dbReference type="PROSITE-ProRule" id="PRU00159"/>
    </source>
</evidence>
<evidence type="ECO:0000255" key="6">
    <source>
        <dbReference type="PROSITE-ProRule" id="PRU00352"/>
    </source>
</evidence>
<evidence type="ECO:0000255" key="7">
    <source>
        <dbReference type="PROSITE-ProRule" id="PRU10028"/>
    </source>
</evidence>
<organism>
    <name type="scientific">Saimiri boliviensis boliviensis</name>
    <name type="common">Bolivian squirrel monkey</name>
    <dbReference type="NCBI Taxonomy" id="39432"/>
    <lineage>
        <taxon>Eukaryota</taxon>
        <taxon>Metazoa</taxon>
        <taxon>Chordata</taxon>
        <taxon>Craniata</taxon>
        <taxon>Vertebrata</taxon>
        <taxon>Euteleostomi</taxon>
        <taxon>Mammalia</taxon>
        <taxon>Eutheria</taxon>
        <taxon>Euarchontoglires</taxon>
        <taxon>Primates</taxon>
        <taxon>Haplorrhini</taxon>
        <taxon>Platyrrhini</taxon>
        <taxon>Cebidae</taxon>
        <taxon>Saimiriinae</taxon>
        <taxon>Saimiri</taxon>
    </lineage>
</organism>
<feature type="signal peptide" evidence="4">
    <location>
        <begin position="1"/>
        <end position="24"/>
    </location>
</feature>
<feature type="chain" id="PRO_0000260432" description="Hepatocyte growth factor receptor">
    <location>
        <begin position="25"/>
        <end position="1381"/>
    </location>
</feature>
<feature type="topological domain" description="Extracellular" evidence="4">
    <location>
        <begin position="25"/>
        <end position="932"/>
    </location>
</feature>
<feature type="transmembrane region" description="Helical" evidence="4">
    <location>
        <begin position="933"/>
        <end position="955"/>
    </location>
</feature>
<feature type="topological domain" description="Cytoplasmic" evidence="4">
    <location>
        <begin position="956"/>
        <end position="1381"/>
    </location>
</feature>
<feature type="domain" description="Sema" evidence="6">
    <location>
        <begin position="27"/>
        <end position="515"/>
    </location>
</feature>
<feature type="domain" description="IPT/TIG 1">
    <location>
        <begin position="563"/>
        <end position="655"/>
    </location>
</feature>
<feature type="domain" description="IPT/TIG 2">
    <location>
        <begin position="657"/>
        <end position="739"/>
    </location>
</feature>
<feature type="domain" description="IPT/TIG 3">
    <location>
        <begin position="742"/>
        <end position="836"/>
    </location>
</feature>
<feature type="domain" description="Protein kinase" evidence="5">
    <location>
        <begin position="1078"/>
        <end position="1345"/>
    </location>
</feature>
<feature type="region of interest" description="Interaction with RANBP9" evidence="1">
    <location>
        <begin position="1212"/>
        <end position="1381"/>
    </location>
</feature>
<feature type="region of interest" description="Interaction with MUC20" evidence="1">
    <location>
        <begin position="1320"/>
        <end position="1359"/>
    </location>
</feature>
<feature type="active site" description="Proton acceptor" evidence="5 7">
    <location>
        <position position="1204"/>
    </location>
</feature>
<feature type="binding site" evidence="5">
    <location>
        <begin position="1084"/>
        <end position="1092"/>
    </location>
    <ligand>
        <name>ATP</name>
        <dbReference type="ChEBI" id="CHEBI:30616"/>
    </ligand>
</feature>
<feature type="binding site" evidence="5">
    <location>
        <position position="1110"/>
    </location>
    <ligand>
        <name>ATP</name>
        <dbReference type="ChEBI" id="CHEBI:30616"/>
    </ligand>
</feature>
<feature type="site" description="Cleavage" evidence="4">
    <location>
        <begin position="307"/>
        <end position="308"/>
    </location>
</feature>
<feature type="modified residue" description="Phosphoserine" evidence="2">
    <location>
        <position position="966"/>
    </location>
</feature>
<feature type="modified residue" description="Phosphothreonine" evidence="2">
    <location>
        <position position="977"/>
    </location>
</feature>
<feature type="modified residue" description="Phosphoserine" evidence="2">
    <location>
        <position position="990"/>
    </location>
</feature>
<feature type="modified residue" description="Phosphoserine" evidence="2">
    <location>
        <position position="997"/>
    </location>
</feature>
<feature type="modified residue" description="Phosphoserine" evidence="2">
    <location>
        <position position="1000"/>
    </location>
</feature>
<feature type="modified residue" description="Phosphotyrosine" evidence="2">
    <location>
        <position position="1003"/>
    </location>
</feature>
<feature type="modified residue" description="Phosphotyrosine" evidence="2">
    <location>
        <position position="1230"/>
    </location>
</feature>
<feature type="modified residue" description="Phosphotyrosine; by autocatalysis" evidence="2">
    <location>
        <position position="1234"/>
    </location>
</feature>
<feature type="modified residue" description="Phosphotyrosine; by autocatalysis" evidence="2">
    <location>
        <position position="1235"/>
    </location>
</feature>
<feature type="modified residue" description="Phosphothreonine" evidence="2">
    <location>
        <position position="1289"/>
    </location>
</feature>
<feature type="modified residue" description="Phosphotyrosine; by autocatalysis" evidence="2">
    <location>
        <position position="1349"/>
    </location>
</feature>
<feature type="modified residue" description="Phosphotyrosine; by autocatalysis" evidence="2">
    <location>
        <position position="1356"/>
    </location>
</feature>
<feature type="modified residue" description="Phosphotyrosine" evidence="2">
    <location>
        <position position="1365"/>
    </location>
</feature>
<feature type="glycosylation site" description="N-linked (GlcNAc...) asparagine" evidence="4">
    <location>
        <position position="45"/>
    </location>
</feature>
<feature type="glycosylation site" description="N-linked (GlcNAc...) asparagine" evidence="4">
    <location>
        <position position="106"/>
    </location>
</feature>
<feature type="glycosylation site" description="N-linked (GlcNAc...) asparagine" evidence="4">
    <location>
        <position position="149"/>
    </location>
</feature>
<feature type="glycosylation site" description="N-linked (GlcNAc...) asparagine" evidence="4">
    <location>
        <position position="202"/>
    </location>
</feature>
<feature type="glycosylation site" description="N-linked (GlcNAc...) asparagine" evidence="4">
    <location>
        <position position="399"/>
    </location>
</feature>
<feature type="glycosylation site" description="O-linked (Man) threonine" evidence="2">
    <location>
        <position position="582"/>
    </location>
</feature>
<feature type="glycosylation site" description="N-linked (GlcNAc...) asparagine" evidence="4">
    <location>
        <position position="607"/>
    </location>
</feature>
<feature type="glycosylation site" description="N-linked (GlcNAc...) asparagine" evidence="4">
    <location>
        <position position="635"/>
    </location>
</feature>
<feature type="glycosylation site" description="O-linked (Man) threonine" evidence="2">
    <location>
        <position position="676"/>
    </location>
</feature>
<feature type="glycosylation site" description="O-linked (Man) threonine" evidence="2">
    <location>
        <position position="761"/>
    </location>
</feature>
<feature type="glycosylation site" description="N-linked (GlcNAc...) asparagine" evidence="4">
    <location>
        <position position="785"/>
    </location>
</feature>
<feature type="glycosylation site" description="N-linked (GlcNAc...) asparagine" evidence="4">
    <location>
        <position position="879"/>
    </location>
</feature>
<feature type="glycosylation site" description="N-linked (GlcNAc...) asparagine" evidence="4">
    <location>
        <position position="930"/>
    </location>
</feature>
<feature type="disulfide bond" evidence="6">
    <location>
        <begin position="95"/>
        <end position="101"/>
    </location>
</feature>
<feature type="disulfide bond" evidence="6">
    <location>
        <begin position="98"/>
        <end position="160"/>
    </location>
</feature>
<feature type="disulfide bond" evidence="6">
    <location>
        <begin position="133"/>
        <end position="141"/>
    </location>
</feature>
<feature type="disulfide bond" evidence="6">
    <location>
        <begin position="172"/>
        <end position="175"/>
    </location>
</feature>
<feature type="disulfide bond" evidence="6">
    <location>
        <begin position="298"/>
        <end position="363"/>
    </location>
</feature>
<feature type="disulfide bond" evidence="6">
    <location>
        <begin position="385"/>
        <end position="397"/>
    </location>
</feature>
<feature type="disulfide bond" evidence="6">
    <location>
        <begin position="520"/>
        <end position="538"/>
    </location>
</feature>
<feature type="disulfide bond" evidence="6">
    <location>
        <begin position="526"/>
        <end position="561"/>
    </location>
</feature>
<feature type="disulfide bond" evidence="6">
    <location>
        <begin position="529"/>
        <end position="545"/>
    </location>
</feature>
<feature type="disulfide bond" evidence="6">
    <location>
        <begin position="541"/>
        <end position="551"/>
    </location>
</feature>
<proteinExistence type="inferred from homology"/>
<sequence>MKAPAVLTPGILLLLFTLVQKSNGECKEALTKSEMNVNMKYQLPNFTAETPIQNVILHEHHIFLGATNYIYVLNEEDLQKVAEHRTGPVLEHPDCFPCQDCSSKANLSGGVWKDNINMALVVDTYYDDQLISCGSVNRGTCQRHVFPHNHTADIQSEVHCIFSPQTEEPSQCPDCVVSALGTKVLLSVKERFLNFFVGNTINSSYVPDHSLHSISVRRLKETKDGFMFLTDQSYVDVLPEFRDSYPIKYVHAFESNNFIYFLAVQRETLNAQTFHTRIIRFCSINSALHSYMEMPLECILTEKRKKRSTKKEVFNILQAAYVSKPGAQLARQIGASLNDDILFGVFAQSKPDSAEPMDRSAVCAFPIKYVNDFFNKIVNKNNVRCLQHFYGPNHEHCFNRTFQRNFLGCETRRDEYRTEFTTALQRIDLFAGQFNKVLLTSISTFVKGDLTIANLGTSEGRFIQIVVSRSVPSTPHVNFLLDSHPVSPEVIVEHPLNHNGYTLVVTGKKITKIPLNGLGCRHFQSCSQCLSAPSFVQCGWCHDKCVRSEECSSGTWTQETCLPTIYKVFPTSAPLEGGTRLTICGWDFGFRRNNKFDLKKTRVLLGNESCTLTLSESTMNTLKCTVGPAMNEHFNMSIIISNAHGTTQYSTFSYVDPIITSISPRYGPMSGGTLLTLTGNYLNSGNSRHISIGGKTCTLKSVSNSILECYTPAQTISTEFPVKLKIDLANRETSIFSYREDPIVYEIHPTKSFISGGSTITGIGKNLNSVSVPRMVINLHEARRNFTVACQHRSNSEIICCTTPSLQQLNLQLPLKTKAFFMLDGILSKYFDLIYVHNPVFKPFEKPVMISMGNENVLEIKGNDIDPEAVKGEVLKVGNKSCENIHLHSEAVLCTVPSDLLKLNSELNIEWKQAISSTVLGKVIVQPDQNFTGLIAGVVSISIALLLLLGLFLWLKKRKQIKDLGSELVRYDARVHTPHLDRLVSARSVSPTTEMVSNESVDYRATFPEDQFPNSSQNGSCRQVQYPLTDMSPILTSGDSDISSPLLQNTVHIDLSALNPELVQAVQHVVIGPSSLIVHFNEVIGRGHFGCVYHGTLLDNDGKKIHCAVKSLNRITDIGEVSQFLTEGIIMKDFSHPNVLSLLGICLRSEGSPLVVLPYMKHGDLRNFIRNETHNPTVKDLIGFGLQVAKGMKYLASKKFVHRDLAARNCMLDEKFTVKVADFGLARDMYDKEYYSVHNKTGAKLPVKWMALESLQTQKFTTKSDVWSFGVLLWELMTRGAPPYPDVNTFDITVYLLQGRRLLQPEYCPDPLYEVMLKCWHPKAEMRPSFSELVSRISAIFSTFIGEHYVHVNATYVNVKCVAPYPSLLSSQDNADGELDT</sequence>
<accession>Q09YH7</accession>
<dbReference type="EC" id="2.7.10.1"/>
<dbReference type="EMBL" id="DP000180">
    <property type="protein sequence ID" value="ABI75303.1"/>
    <property type="molecule type" value="Genomic_DNA"/>
</dbReference>
<dbReference type="RefSeq" id="XP_003921107.1">
    <property type="nucleotide sequence ID" value="XM_003921058.3"/>
</dbReference>
<dbReference type="SMR" id="Q09YH7"/>
<dbReference type="STRING" id="39432.ENSSBOP00000004438"/>
<dbReference type="GlyCosmos" id="Q09YH7">
    <property type="glycosylation" value="10 sites, No reported glycans"/>
</dbReference>
<dbReference type="Ensembl" id="ENSSBOT00000020797.1">
    <property type="protein sequence ID" value="ENSSBOP00000004405.1"/>
    <property type="gene ID" value="ENSSBOG00000018494.1"/>
</dbReference>
<dbReference type="GeneID" id="101038696"/>
<dbReference type="KEGG" id="sbq:101038696"/>
<dbReference type="CTD" id="4233"/>
<dbReference type="GeneTree" id="ENSGT00940000158022"/>
<dbReference type="Proteomes" id="UP000233220">
    <property type="component" value="Unplaced"/>
</dbReference>
<dbReference type="GO" id="GO:0005886">
    <property type="term" value="C:plasma membrane"/>
    <property type="evidence" value="ECO:0007669"/>
    <property type="project" value="TreeGrafter"/>
</dbReference>
<dbReference type="GO" id="GO:0002116">
    <property type="term" value="C:semaphorin receptor complex"/>
    <property type="evidence" value="ECO:0007669"/>
    <property type="project" value="TreeGrafter"/>
</dbReference>
<dbReference type="GO" id="GO:0005524">
    <property type="term" value="F:ATP binding"/>
    <property type="evidence" value="ECO:0007669"/>
    <property type="project" value="UniProtKB-KW"/>
</dbReference>
<dbReference type="GO" id="GO:0017154">
    <property type="term" value="F:semaphorin receptor activity"/>
    <property type="evidence" value="ECO:0007669"/>
    <property type="project" value="InterPro"/>
</dbReference>
<dbReference type="GO" id="GO:0004714">
    <property type="term" value="F:transmembrane receptor protein tyrosine kinase activity"/>
    <property type="evidence" value="ECO:0007669"/>
    <property type="project" value="UniProtKB-EC"/>
</dbReference>
<dbReference type="GO" id="GO:0007169">
    <property type="term" value="P:cell surface receptor protein tyrosine kinase signaling pathway"/>
    <property type="evidence" value="ECO:0007669"/>
    <property type="project" value="InterPro"/>
</dbReference>
<dbReference type="GO" id="GO:0050918">
    <property type="term" value="P:positive chemotaxis"/>
    <property type="evidence" value="ECO:0000250"/>
    <property type="project" value="UniProtKB"/>
</dbReference>
<dbReference type="GO" id="GO:2001028">
    <property type="term" value="P:positive regulation of endothelial cell chemotaxis"/>
    <property type="evidence" value="ECO:0000250"/>
    <property type="project" value="UniProtKB"/>
</dbReference>
<dbReference type="GO" id="GO:0071526">
    <property type="term" value="P:semaphorin-plexin signaling pathway"/>
    <property type="evidence" value="ECO:0000250"/>
    <property type="project" value="UniProtKB"/>
</dbReference>
<dbReference type="CDD" id="cd00603">
    <property type="entry name" value="IPT_PCSR"/>
    <property type="match status" value="1"/>
</dbReference>
<dbReference type="CDD" id="cd01180">
    <property type="entry name" value="IPT_plexin_repeat1"/>
    <property type="match status" value="1"/>
</dbReference>
<dbReference type="CDD" id="cd01179">
    <property type="entry name" value="IPT_plexin_repeat2"/>
    <property type="match status" value="1"/>
</dbReference>
<dbReference type="CDD" id="cd05058">
    <property type="entry name" value="PTKc_Met_Ron"/>
    <property type="match status" value="1"/>
</dbReference>
<dbReference type="FunFam" id="1.10.510.10:FF:000093">
    <property type="entry name" value="Hepatocyte growth factor receptor"/>
    <property type="match status" value="1"/>
</dbReference>
<dbReference type="FunFam" id="2.130.10.10:FF:000088">
    <property type="entry name" value="Hepatocyte growth factor receptor"/>
    <property type="match status" value="1"/>
</dbReference>
<dbReference type="FunFam" id="2.60.40.10:FF:000213">
    <property type="entry name" value="Hepatocyte growth factor receptor"/>
    <property type="match status" value="1"/>
</dbReference>
<dbReference type="FunFam" id="2.60.40.10:FF:000400">
    <property type="entry name" value="Hepatocyte growth factor receptor"/>
    <property type="match status" value="1"/>
</dbReference>
<dbReference type="FunFam" id="2.60.40.10:FF:002708">
    <property type="entry name" value="Hepatocyte growth factor receptor"/>
    <property type="match status" value="1"/>
</dbReference>
<dbReference type="FunFam" id="3.30.200.20:FF:000188">
    <property type="entry name" value="Hepatocyte growth factor receptor"/>
    <property type="match status" value="1"/>
</dbReference>
<dbReference type="FunFam" id="3.30.1680.10:FF:000006">
    <property type="entry name" value="Macrophage-stimulating 1 receptor b"/>
    <property type="match status" value="1"/>
</dbReference>
<dbReference type="Gene3D" id="2.60.40.10">
    <property type="entry name" value="Immunoglobulins"/>
    <property type="match status" value="3"/>
</dbReference>
<dbReference type="Gene3D" id="3.30.200.20">
    <property type="entry name" value="Phosphorylase Kinase, domain 1"/>
    <property type="match status" value="1"/>
</dbReference>
<dbReference type="Gene3D" id="1.10.510.10">
    <property type="entry name" value="Transferase(Phosphotransferase) domain 1"/>
    <property type="match status" value="1"/>
</dbReference>
<dbReference type="Gene3D" id="2.130.10.10">
    <property type="entry name" value="YVTN repeat-like/Quinoprotein amine dehydrogenase"/>
    <property type="match status" value="1"/>
</dbReference>
<dbReference type="InterPro" id="IPR013783">
    <property type="entry name" value="Ig-like_fold"/>
</dbReference>
<dbReference type="InterPro" id="IPR014756">
    <property type="entry name" value="Ig_E-set"/>
</dbReference>
<dbReference type="InterPro" id="IPR002909">
    <property type="entry name" value="IPT_dom"/>
</dbReference>
<dbReference type="InterPro" id="IPR011009">
    <property type="entry name" value="Kinase-like_dom_sf"/>
</dbReference>
<dbReference type="InterPro" id="IPR031148">
    <property type="entry name" value="Plexin"/>
</dbReference>
<dbReference type="InterPro" id="IPR002165">
    <property type="entry name" value="Plexin_repeat"/>
</dbReference>
<dbReference type="InterPro" id="IPR000719">
    <property type="entry name" value="Prot_kinase_dom"/>
</dbReference>
<dbReference type="InterPro" id="IPR017441">
    <property type="entry name" value="Protein_kinase_ATP_BS"/>
</dbReference>
<dbReference type="InterPro" id="IPR016201">
    <property type="entry name" value="PSI"/>
</dbReference>
<dbReference type="InterPro" id="IPR001627">
    <property type="entry name" value="Semap_dom"/>
</dbReference>
<dbReference type="InterPro" id="IPR036352">
    <property type="entry name" value="Semap_dom_sf"/>
</dbReference>
<dbReference type="InterPro" id="IPR001245">
    <property type="entry name" value="Ser-Thr/Tyr_kinase_cat_dom"/>
</dbReference>
<dbReference type="InterPro" id="IPR008266">
    <property type="entry name" value="Tyr_kinase_AS"/>
</dbReference>
<dbReference type="InterPro" id="IPR020635">
    <property type="entry name" value="Tyr_kinase_cat_dom"/>
</dbReference>
<dbReference type="InterPro" id="IPR016244">
    <property type="entry name" value="Tyr_kinase_HGF/MSP_rcpt"/>
</dbReference>
<dbReference type="InterPro" id="IPR015943">
    <property type="entry name" value="WD40/YVTN_repeat-like_dom_sf"/>
</dbReference>
<dbReference type="PANTHER" id="PTHR22625:SF61">
    <property type="entry name" value="HEPATOCYTE GROWTH FACTOR RECEPTOR"/>
    <property type="match status" value="1"/>
</dbReference>
<dbReference type="PANTHER" id="PTHR22625">
    <property type="entry name" value="PLEXIN"/>
    <property type="match status" value="1"/>
</dbReference>
<dbReference type="Pfam" id="PF07714">
    <property type="entry name" value="PK_Tyr_Ser-Thr"/>
    <property type="match status" value="1"/>
</dbReference>
<dbReference type="Pfam" id="PF01437">
    <property type="entry name" value="PSI"/>
    <property type="match status" value="1"/>
</dbReference>
<dbReference type="Pfam" id="PF01403">
    <property type="entry name" value="Sema"/>
    <property type="match status" value="1"/>
</dbReference>
<dbReference type="Pfam" id="PF01833">
    <property type="entry name" value="TIG"/>
    <property type="match status" value="3"/>
</dbReference>
<dbReference type="PIRSF" id="PIRSF000617">
    <property type="entry name" value="TyrPK_HGF-R"/>
    <property type="match status" value="1"/>
</dbReference>
<dbReference type="PRINTS" id="PR00109">
    <property type="entry name" value="TYRKINASE"/>
</dbReference>
<dbReference type="SMART" id="SM00429">
    <property type="entry name" value="IPT"/>
    <property type="match status" value="4"/>
</dbReference>
<dbReference type="SMART" id="SM00423">
    <property type="entry name" value="PSI"/>
    <property type="match status" value="1"/>
</dbReference>
<dbReference type="SMART" id="SM00630">
    <property type="entry name" value="Sema"/>
    <property type="match status" value="1"/>
</dbReference>
<dbReference type="SMART" id="SM00219">
    <property type="entry name" value="TyrKc"/>
    <property type="match status" value="1"/>
</dbReference>
<dbReference type="SUPFAM" id="SSF81296">
    <property type="entry name" value="E set domains"/>
    <property type="match status" value="3"/>
</dbReference>
<dbReference type="SUPFAM" id="SSF103575">
    <property type="entry name" value="Plexin repeat"/>
    <property type="match status" value="1"/>
</dbReference>
<dbReference type="SUPFAM" id="SSF56112">
    <property type="entry name" value="Protein kinase-like (PK-like)"/>
    <property type="match status" value="1"/>
</dbReference>
<dbReference type="SUPFAM" id="SSF101912">
    <property type="entry name" value="Sema domain"/>
    <property type="match status" value="1"/>
</dbReference>
<dbReference type="PROSITE" id="PS00107">
    <property type="entry name" value="PROTEIN_KINASE_ATP"/>
    <property type="match status" value="1"/>
</dbReference>
<dbReference type="PROSITE" id="PS50011">
    <property type="entry name" value="PROTEIN_KINASE_DOM"/>
    <property type="match status" value="1"/>
</dbReference>
<dbReference type="PROSITE" id="PS00109">
    <property type="entry name" value="PROTEIN_KINASE_TYR"/>
    <property type="match status" value="1"/>
</dbReference>
<dbReference type="PROSITE" id="PS51004">
    <property type="entry name" value="SEMA"/>
    <property type="match status" value="1"/>
</dbReference>